<keyword id="KW-0687">Ribonucleoprotein</keyword>
<keyword id="KW-0689">Ribosomal protein</keyword>
<keyword id="KW-0694">RNA-binding</keyword>
<keyword id="KW-0699">rRNA-binding</keyword>
<gene>
    <name evidence="1" type="primary">rplU</name>
    <name type="ordered locus">WD_0134</name>
</gene>
<reference key="1">
    <citation type="journal article" date="2004" name="PLoS Biol.">
        <title>Phylogenomics of the reproductive parasite Wolbachia pipientis wMel: a streamlined genome overrun by mobile genetic elements.</title>
        <authorList>
            <person name="Wu M."/>
            <person name="Sun L.V."/>
            <person name="Vamathevan J.J."/>
            <person name="Riegler M."/>
            <person name="DeBoy R.T."/>
            <person name="Brownlie J.C."/>
            <person name="McGraw E.A."/>
            <person name="Martin W."/>
            <person name="Esser C."/>
            <person name="Ahmadinejad N."/>
            <person name="Wiegand C."/>
            <person name="Madupu R."/>
            <person name="Beanan M.J."/>
            <person name="Brinkac L.M."/>
            <person name="Daugherty S.C."/>
            <person name="Durkin A.S."/>
            <person name="Kolonay J.F."/>
            <person name="Nelson W.C."/>
            <person name="Mohamoud Y."/>
            <person name="Lee P."/>
            <person name="Berry K.J."/>
            <person name="Young M.B."/>
            <person name="Utterback T.R."/>
            <person name="Weidman J.F."/>
            <person name="Nierman W.C."/>
            <person name="Paulsen I.T."/>
            <person name="Nelson K.E."/>
            <person name="Tettelin H."/>
            <person name="O'Neill S.L."/>
            <person name="Eisen J.A."/>
        </authorList>
    </citation>
    <scope>NUCLEOTIDE SEQUENCE [LARGE SCALE GENOMIC DNA]</scope>
</reference>
<comment type="function">
    <text evidence="1">This protein binds to 23S rRNA in the presence of protein L20.</text>
</comment>
<comment type="subunit">
    <text evidence="1">Part of the 50S ribosomal subunit. Contacts protein L20.</text>
</comment>
<comment type="similarity">
    <text evidence="1">Belongs to the bacterial ribosomal protein bL21 family.</text>
</comment>
<proteinExistence type="inferred from homology"/>
<organism>
    <name type="scientific">Wolbachia pipientis wMel</name>
    <dbReference type="NCBI Taxonomy" id="163164"/>
    <lineage>
        <taxon>Bacteria</taxon>
        <taxon>Pseudomonadati</taxon>
        <taxon>Pseudomonadota</taxon>
        <taxon>Alphaproteobacteria</taxon>
        <taxon>Rickettsiales</taxon>
        <taxon>Anaplasmataceae</taxon>
        <taxon>Wolbachieae</taxon>
        <taxon>Wolbachia</taxon>
    </lineage>
</organism>
<sequence>MFAVIETGGKQYLVKEGSIIKVEKLEAEEKKEVEINKVICISNSGLSYSSNATVKAEVLEQCRGEKIIIFKKKRRKNYRRKTGHRQYITVLRINEISLQK</sequence>
<name>RL21_WOLPM</name>
<dbReference type="EMBL" id="AE017196">
    <property type="protein sequence ID" value="AAS13888.1"/>
    <property type="molecule type" value="Genomic_DNA"/>
</dbReference>
<dbReference type="RefSeq" id="WP_010082251.1">
    <property type="nucleotide sequence ID" value="NZ_OX384529.1"/>
</dbReference>
<dbReference type="SMR" id="Q73IM3"/>
<dbReference type="EnsemblBacteria" id="AAS13888">
    <property type="protein sequence ID" value="AAS13888"/>
    <property type="gene ID" value="WD_0134"/>
</dbReference>
<dbReference type="GeneID" id="70035626"/>
<dbReference type="KEGG" id="wol:WD_0134"/>
<dbReference type="eggNOG" id="COG0261">
    <property type="taxonomic scope" value="Bacteria"/>
</dbReference>
<dbReference type="Proteomes" id="UP000008215">
    <property type="component" value="Chromosome"/>
</dbReference>
<dbReference type="GO" id="GO:0005737">
    <property type="term" value="C:cytoplasm"/>
    <property type="evidence" value="ECO:0007669"/>
    <property type="project" value="UniProtKB-ARBA"/>
</dbReference>
<dbReference type="GO" id="GO:1990904">
    <property type="term" value="C:ribonucleoprotein complex"/>
    <property type="evidence" value="ECO:0007669"/>
    <property type="project" value="UniProtKB-KW"/>
</dbReference>
<dbReference type="GO" id="GO:0005840">
    <property type="term" value="C:ribosome"/>
    <property type="evidence" value="ECO:0007669"/>
    <property type="project" value="UniProtKB-KW"/>
</dbReference>
<dbReference type="GO" id="GO:0019843">
    <property type="term" value="F:rRNA binding"/>
    <property type="evidence" value="ECO:0007669"/>
    <property type="project" value="UniProtKB-UniRule"/>
</dbReference>
<dbReference type="GO" id="GO:0003735">
    <property type="term" value="F:structural constituent of ribosome"/>
    <property type="evidence" value="ECO:0007669"/>
    <property type="project" value="InterPro"/>
</dbReference>
<dbReference type="GO" id="GO:0006412">
    <property type="term" value="P:translation"/>
    <property type="evidence" value="ECO:0007669"/>
    <property type="project" value="UniProtKB-UniRule"/>
</dbReference>
<dbReference type="HAMAP" id="MF_01363">
    <property type="entry name" value="Ribosomal_bL21"/>
    <property type="match status" value="1"/>
</dbReference>
<dbReference type="InterPro" id="IPR028909">
    <property type="entry name" value="bL21-like"/>
</dbReference>
<dbReference type="InterPro" id="IPR036164">
    <property type="entry name" value="bL21-like_sf"/>
</dbReference>
<dbReference type="InterPro" id="IPR001787">
    <property type="entry name" value="Ribosomal_bL21"/>
</dbReference>
<dbReference type="InterPro" id="IPR018258">
    <property type="entry name" value="Ribosomal_bL21_CS"/>
</dbReference>
<dbReference type="NCBIfam" id="TIGR00061">
    <property type="entry name" value="L21"/>
    <property type="match status" value="1"/>
</dbReference>
<dbReference type="PANTHER" id="PTHR21349">
    <property type="entry name" value="50S RIBOSOMAL PROTEIN L21"/>
    <property type="match status" value="1"/>
</dbReference>
<dbReference type="PANTHER" id="PTHR21349:SF0">
    <property type="entry name" value="LARGE RIBOSOMAL SUBUNIT PROTEIN BL21M"/>
    <property type="match status" value="1"/>
</dbReference>
<dbReference type="Pfam" id="PF00829">
    <property type="entry name" value="Ribosomal_L21p"/>
    <property type="match status" value="1"/>
</dbReference>
<dbReference type="SUPFAM" id="SSF141091">
    <property type="entry name" value="L21p-like"/>
    <property type="match status" value="1"/>
</dbReference>
<dbReference type="PROSITE" id="PS01169">
    <property type="entry name" value="RIBOSOMAL_L21"/>
    <property type="match status" value="1"/>
</dbReference>
<feature type="chain" id="PRO_0000270746" description="Large ribosomal subunit protein bL21">
    <location>
        <begin position="1"/>
        <end position="100"/>
    </location>
</feature>
<accession>Q73IM3</accession>
<evidence type="ECO:0000255" key="1">
    <source>
        <dbReference type="HAMAP-Rule" id="MF_01363"/>
    </source>
</evidence>
<evidence type="ECO:0000305" key="2"/>
<protein>
    <recommendedName>
        <fullName evidence="1">Large ribosomal subunit protein bL21</fullName>
    </recommendedName>
    <alternativeName>
        <fullName evidence="2">50S ribosomal protein L21</fullName>
    </alternativeName>
</protein>